<dbReference type="EC" id="2.7.7.77" evidence="1"/>
<dbReference type="EMBL" id="CP000141">
    <property type="protein sequence ID" value="ABB14248.1"/>
    <property type="molecule type" value="Genomic_DNA"/>
</dbReference>
<dbReference type="RefSeq" id="WP_011343793.1">
    <property type="nucleotide sequence ID" value="NC_007503.1"/>
</dbReference>
<dbReference type="SMR" id="Q3ADR7"/>
<dbReference type="FunCoup" id="Q3ADR7">
    <property type="interactions" value="126"/>
</dbReference>
<dbReference type="STRING" id="246194.CHY_0866"/>
<dbReference type="KEGG" id="chy:CHY_0866"/>
<dbReference type="eggNOG" id="COG0746">
    <property type="taxonomic scope" value="Bacteria"/>
</dbReference>
<dbReference type="HOGENOM" id="CLU_055597_2_1_9"/>
<dbReference type="InParanoid" id="Q3ADR7"/>
<dbReference type="OrthoDB" id="9788394at2"/>
<dbReference type="Proteomes" id="UP000002706">
    <property type="component" value="Chromosome"/>
</dbReference>
<dbReference type="GO" id="GO:0005737">
    <property type="term" value="C:cytoplasm"/>
    <property type="evidence" value="ECO:0007669"/>
    <property type="project" value="UniProtKB-SubCell"/>
</dbReference>
<dbReference type="GO" id="GO:0005525">
    <property type="term" value="F:GTP binding"/>
    <property type="evidence" value="ECO:0007669"/>
    <property type="project" value="UniProtKB-UniRule"/>
</dbReference>
<dbReference type="GO" id="GO:0046872">
    <property type="term" value="F:metal ion binding"/>
    <property type="evidence" value="ECO:0007669"/>
    <property type="project" value="UniProtKB-KW"/>
</dbReference>
<dbReference type="GO" id="GO:0061603">
    <property type="term" value="F:molybdenum cofactor guanylyltransferase activity"/>
    <property type="evidence" value="ECO:0007669"/>
    <property type="project" value="UniProtKB-EC"/>
</dbReference>
<dbReference type="GO" id="GO:0006777">
    <property type="term" value="P:Mo-molybdopterin cofactor biosynthetic process"/>
    <property type="evidence" value="ECO:0007669"/>
    <property type="project" value="UniProtKB-KW"/>
</dbReference>
<dbReference type="CDD" id="cd02503">
    <property type="entry name" value="MobA"/>
    <property type="match status" value="1"/>
</dbReference>
<dbReference type="Gene3D" id="3.90.550.10">
    <property type="entry name" value="Spore Coat Polysaccharide Biosynthesis Protein SpsA, Chain A"/>
    <property type="match status" value="1"/>
</dbReference>
<dbReference type="HAMAP" id="MF_00316">
    <property type="entry name" value="MobA"/>
    <property type="match status" value="1"/>
</dbReference>
<dbReference type="InterPro" id="IPR025877">
    <property type="entry name" value="MobA-like_NTP_Trfase"/>
</dbReference>
<dbReference type="InterPro" id="IPR013482">
    <property type="entry name" value="Molybde_CF_guanTrfase"/>
</dbReference>
<dbReference type="InterPro" id="IPR029044">
    <property type="entry name" value="Nucleotide-diphossugar_trans"/>
</dbReference>
<dbReference type="PANTHER" id="PTHR19136">
    <property type="entry name" value="MOLYBDENUM COFACTOR GUANYLYLTRANSFERASE"/>
    <property type="match status" value="1"/>
</dbReference>
<dbReference type="PANTHER" id="PTHR19136:SF81">
    <property type="entry name" value="MOLYBDENUM COFACTOR GUANYLYLTRANSFERASE"/>
    <property type="match status" value="1"/>
</dbReference>
<dbReference type="Pfam" id="PF12804">
    <property type="entry name" value="NTP_transf_3"/>
    <property type="match status" value="1"/>
</dbReference>
<dbReference type="SUPFAM" id="SSF53448">
    <property type="entry name" value="Nucleotide-diphospho-sugar transferases"/>
    <property type="match status" value="1"/>
</dbReference>
<accession>Q3ADR7</accession>
<reference key="1">
    <citation type="journal article" date="2005" name="PLoS Genet.">
        <title>Life in hot carbon monoxide: the complete genome sequence of Carboxydothermus hydrogenoformans Z-2901.</title>
        <authorList>
            <person name="Wu M."/>
            <person name="Ren Q."/>
            <person name="Durkin A.S."/>
            <person name="Daugherty S.C."/>
            <person name="Brinkac L.M."/>
            <person name="Dodson R.J."/>
            <person name="Madupu R."/>
            <person name="Sullivan S.A."/>
            <person name="Kolonay J.F."/>
            <person name="Nelson W.C."/>
            <person name="Tallon L.J."/>
            <person name="Jones K.M."/>
            <person name="Ulrich L.E."/>
            <person name="Gonzalez J.M."/>
            <person name="Zhulin I.B."/>
            <person name="Robb F.T."/>
            <person name="Eisen J.A."/>
        </authorList>
    </citation>
    <scope>NUCLEOTIDE SEQUENCE [LARGE SCALE GENOMIC DNA]</scope>
    <source>
        <strain>ATCC BAA-161 / DSM 6008 / Z-2901</strain>
    </source>
</reference>
<sequence length="197" mass="22383">MQNLTVAILAGGKSSRMGQNKALLPLGTMKIIEHLVTNLRPIASELLLVANTDEYAFLNLPVYRDRFPGQGPLAGIETALRVAFNEKVYITACDLPLLPAEIPRFLAENTEDYDVTVLAYKGKIEPLIGIYRKSIYPVVEKHLILRKNKIIDFYPQVKVKIINFEQLPENLQREEFLLNVNTPADYEKLLKIFSLKE</sequence>
<organism>
    <name type="scientific">Carboxydothermus hydrogenoformans (strain ATCC BAA-161 / DSM 6008 / Z-2901)</name>
    <dbReference type="NCBI Taxonomy" id="246194"/>
    <lineage>
        <taxon>Bacteria</taxon>
        <taxon>Bacillati</taxon>
        <taxon>Bacillota</taxon>
        <taxon>Clostridia</taxon>
        <taxon>Thermoanaerobacterales</taxon>
        <taxon>Thermoanaerobacteraceae</taxon>
        <taxon>Carboxydothermus</taxon>
    </lineage>
</organism>
<gene>
    <name evidence="1" type="primary">mobA</name>
    <name type="ordered locus">CHY_0866</name>
</gene>
<proteinExistence type="inferred from homology"/>
<name>MOBA_CARHZ</name>
<evidence type="ECO:0000255" key="1">
    <source>
        <dbReference type="HAMAP-Rule" id="MF_00316"/>
    </source>
</evidence>
<protein>
    <recommendedName>
        <fullName evidence="1">Probable molybdenum cofactor guanylyltransferase</fullName>
        <shortName evidence="1">MoCo guanylyltransferase</shortName>
        <ecNumber evidence="1">2.7.7.77</ecNumber>
    </recommendedName>
    <alternativeName>
        <fullName evidence="1">GTP:molybdopterin guanylyltransferase</fullName>
    </alternativeName>
    <alternativeName>
        <fullName evidence="1">Mo-MPT guanylyltransferase</fullName>
    </alternativeName>
    <alternativeName>
        <fullName evidence="1">Molybdopterin guanylyltransferase</fullName>
    </alternativeName>
    <alternativeName>
        <fullName evidence="1">Molybdopterin-guanine dinucleotide synthase</fullName>
        <shortName evidence="1">MGD synthase</shortName>
    </alternativeName>
</protein>
<feature type="chain" id="PRO_1000019116" description="Probable molybdenum cofactor guanylyltransferase">
    <location>
        <begin position="1"/>
        <end position="197"/>
    </location>
</feature>
<feature type="binding site" evidence="1">
    <location>
        <begin position="9"/>
        <end position="11"/>
    </location>
    <ligand>
        <name>GTP</name>
        <dbReference type="ChEBI" id="CHEBI:37565"/>
    </ligand>
</feature>
<feature type="binding site" evidence="1">
    <location>
        <position position="21"/>
    </location>
    <ligand>
        <name>GTP</name>
        <dbReference type="ChEBI" id="CHEBI:37565"/>
    </ligand>
</feature>
<feature type="binding site" evidence="1">
    <location>
        <position position="65"/>
    </location>
    <ligand>
        <name>GTP</name>
        <dbReference type="ChEBI" id="CHEBI:37565"/>
    </ligand>
</feature>
<feature type="binding site" evidence="1">
    <location>
        <position position="94"/>
    </location>
    <ligand>
        <name>GTP</name>
        <dbReference type="ChEBI" id="CHEBI:37565"/>
    </ligand>
</feature>
<feature type="binding site" evidence="1">
    <location>
        <position position="94"/>
    </location>
    <ligand>
        <name>Mg(2+)</name>
        <dbReference type="ChEBI" id="CHEBI:18420"/>
    </ligand>
</feature>
<comment type="function">
    <text evidence="1">Transfers a GMP moiety from GTP to Mo-molybdopterin (Mo-MPT) cofactor (Moco or molybdenum cofactor) to form Mo-molybdopterin guanine dinucleotide (Mo-MGD) cofactor.</text>
</comment>
<comment type="catalytic activity">
    <reaction evidence="1">
        <text>Mo-molybdopterin + GTP + H(+) = Mo-molybdopterin guanine dinucleotide + diphosphate</text>
        <dbReference type="Rhea" id="RHEA:34243"/>
        <dbReference type="ChEBI" id="CHEBI:15378"/>
        <dbReference type="ChEBI" id="CHEBI:33019"/>
        <dbReference type="ChEBI" id="CHEBI:37565"/>
        <dbReference type="ChEBI" id="CHEBI:71302"/>
        <dbReference type="ChEBI" id="CHEBI:71310"/>
        <dbReference type="EC" id="2.7.7.77"/>
    </reaction>
</comment>
<comment type="cofactor">
    <cofactor evidence="1">
        <name>Mg(2+)</name>
        <dbReference type="ChEBI" id="CHEBI:18420"/>
    </cofactor>
</comment>
<comment type="subcellular location">
    <subcellularLocation>
        <location evidence="1">Cytoplasm</location>
    </subcellularLocation>
</comment>
<comment type="domain">
    <text evidence="1">The N-terminal domain determines nucleotide recognition and specific binding, while the C-terminal domain determines the specific binding to the target protein.</text>
</comment>
<comment type="similarity">
    <text evidence="1">Belongs to the MobA family.</text>
</comment>
<keyword id="KW-0963">Cytoplasm</keyword>
<keyword id="KW-0342">GTP-binding</keyword>
<keyword id="KW-0460">Magnesium</keyword>
<keyword id="KW-0479">Metal-binding</keyword>
<keyword id="KW-0501">Molybdenum cofactor biosynthesis</keyword>
<keyword id="KW-0547">Nucleotide-binding</keyword>
<keyword id="KW-1185">Reference proteome</keyword>
<keyword id="KW-0808">Transferase</keyword>